<reference key="1">
    <citation type="journal article" date="1997" name="J. Clin. Invest.">
        <title>Alternative expression of platelet glycoprotein Ib(beta) mRNA from an adjacent 5' gene with an imperfect polyadenylation signal sequence.</title>
        <authorList>
            <person name="Zieger B."/>
            <person name="Hashimoto Y."/>
            <person name="Ware J."/>
        </authorList>
    </citation>
    <scope>NUCLEOTIDE SEQUENCE [MRNA] (ISOFORM 1)</scope>
    <source>
        <tissue>Brain</tissue>
    </source>
</reference>
<reference key="2">
    <citation type="journal article" date="1997" name="Hum. Genet.">
        <title>A human gene similar to Drosophila melanogaster peanut maps to the DiGeorge syndrome region of 22q11.</title>
        <authorList>
            <person name="McKie J."/>
            <person name="Sutherland H."/>
            <person name="Harvey E."/>
            <person name="Kim U.J."/>
            <person name="Scambler P.J."/>
        </authorList>
    </citation>
    <scope>NUCLEOTIDE SEQUENCE [MRNA] (ISOFORM 1)</scope>
    <source>
        <tissue>Heart</tissue>
    </source>
</reference>
<reference key="3">
    <citation type="journal article" date="1998" name="Gene">
        <title>Structure and expression of the human septin gene HCDCREL-1.</title>
        <authorList>
            <person name="Yagi M."/>
            <person name="Zieger B."/>
            <person name="Roth G.J."/>
            <person name="Ware J."/>
        </authorList>
    </citation>
    <scope>NUCLEOTIDE SEQUENCE [GENOMIC DNA]</scope>
    <source>
        <tissue>Brain</tissue>
    </source>
</reference>
<reference key="4">
    <citation type="journal article" date="2004" name="Genome Biol.">
        <title>A genome annotation-driven approach to cloning the human ORFeome.</title>
        <authorList>
            <person name="Collins J.E."/>
            <person name="Wright C.L."/>
            <person name="Edwards C.A."/>
            <person name="Davis M.P."/>
            <person name="Grinham J.A."/>
            <person name="Cole C.G."/>
            <person name="Goward M.E."/>
            <person name="Aguado B."/>
            <person name="Mallya M."/>
            <person name="Mokrab Y."/>
            <person name="Huckle E.J."/>
            <person name="Beare D.M."/>
            <person name="Dunham I."/>
        </authorList>
    </citation>
    <scope>NUCLEOTIDE SEQUENCE [LARGE SCALE MRNA] (ISOFORM 1)</scope>
</reference>
<reference key="5">
    <citation type="journal article" date="2004" name="Nat. Genet.">
        <title>Complete sequencing and characterization of 21,243 full-length human cDNAs.</title>
        <authorList>
            <person name="Ota T."/>
            <person name="Suzuki Y."/>
            <person name="Nishikawa T."/>
            <person name="Otsuki T."/>
            <person name="Sugiyama T."/>
            <person name="Irie R."/>
            <person name="Wakamatsu A."/>
            <person name="Hayashi K."/>
            <person name="Sato H."/>
            <person name="Nagai K."/>
            <person name="Kimura K."/>
            <person name="Makita H."/>
            <person name="Sekine M."/>
            <person name="Obayashi M."/>
            <person name="Nishi T."/>
            <person name="Shibahara T."/>
            <person name="Tanaka T."/>
            <person name="Ishii S."/>
            <person name="Yamamoto J."/>
            <person name="Saito K."/>
            <person name="Kawai Y."/>
            <person name="Isono Y."/>
            <person name="Nakamura Y."/>
            <person name="Nagahari K."/>
            <person name="Murakami K."/>
            <person name="Yasuda T."/>
            <person name="Iwayanagi T."/>
            <person name="Wagatsuma M."/>
            <person name="Shiratori A."/>
            <person name="Sudo H."/>
            <person name="Hosoiri T."/>
            <person name="Kaku Y."/>
            <person name="Kodaira H."/>
            <person name="Kondo H."/>
            <person name="Sugawara M."/>
            <person name="Takahashi M."/>
            <person name="Kanda K."/>
            <person name="Yokoi T."/>
            <person name="Furuya T."/>
            <person name="Kikkawa E."/>
            <person name="Omura Y."/>
            <person name="Abe K."/>
            <person name="Kamihara K."/>
            <person name="Katsuta N."/>
            <person name="Sato K."/>
            <person name="Tanikawa M."/>
            <person name="Yamazaki M."/>
            <person name="Ninomiya K."/>
            <person name="Ishibashi T."/>
            <person name="Yamashita H."/>
            <person name="Murakawa K."/>
            <person name="Fujimori K."/>
            <person name="Tanai H."/>
            <person name="Kimata M."/>
            <person name="Watanabe M."/>
            <person name="Hiraoka S."/>
            <person name="Chiba Y."/>
            <person name="Ishida S."/>
            <person name="Ono Y."/>
            <person name="Takiguchi S."/>
            <person name="Watanabe S."/>
            <person name="Yosida M."/>
            <person name="Hotuta T."/>
            <person name="Kusano J."/>
            <person name="Kanehori K."/>
            <person name="Takahashi-Fujii A."/>
            <person name="Hara H."/>
            <person name="Tanase T.-O."/>
            <person name="Nomura Y."/>
            <person name="Togiya S."/>
            <person name="Komai F."/>
            <person name="Hara R."/>
            <person name="Takeuchi K."/>
            <person name="Arita M."/>
            <person name="Imose N."/>
            <person name="Musashino K."/>
            <person name="Yuuki H."/>
            <person name="Oshima A."/>
            <person name="Sasaki N."/>
            <person name="Aotsuka S."/>
            <person name="Yoshikawa Y."/>
            <person name="Matsunawa H."/>
            <person name="Ichihara T."/>
            <person name="Shiohata N."/>
            <person name="Sano S."/>
            <person name="Moriya S."/>
            <person name="Momiyama H."/>
            <person name="Satoh N."/>
            <person name="Takami S."/>
            <person name="Terashima Y."/>
            <person name="Suzuki O."/>
            <person name="Nakagawa S."/>
            <person name="Senoh A."/>
            <person name="Mizoguchi H."/>
            <person name="Goto Y."/>
            <person name="Shimizu F."/>
            <person name="Wakebe H."/>
            <person name="Hishigaki H."/>
            <person name="Watanabe T."/>
            <person name="Sugiyama A."/>
            <person name="Takemoto M."/>
            <person name="Kawakami B."/>
            <person name="Yamazaki M."/>
            <person name="Watanabe K."/>
            <person name="Kumagai A."/>
            <person name="Itakura S."/>
            <person name="Fukuzumi Y."/>
            <person name="Fujimori Y."/>
            <person name="Komiyama M."/>
            <person name="Tashiro H."/>
            <person name="Tanigami A."/>
            <person name="Fujiwara T."/>
            <person name="Ono T."/>
            <person name="Yamada K."/>
            <person name="Fujii Y."/>
            <person name="Ozaki K."/>
            <person name="Hirao M."/>
            <person name="Ohmori Y."/>
            <person name="Kawabata A."/>
            <person name="Hikiji T."/>
            <person name="Kobatake N."/>
            <person name="Inagaki H."/>
            <person name="Ikema Y."/>
            <person name="Okamoto S."/>
            <person name="Okitani R."/>
            <person name="Kawakami T."/>
            <person name="Noguchi S."/>
            <person name="Itoh T."/>
            <person name="Shigeta K."/>
            <person name="Senba T."/>
            <person name="Matsumura K."/>
            <person name="Nakajima Y."/>
            <person name="Mizuno T."/>
            <person name="Morinaga M."/>
            <person name="Sasaki M."/>
            <person name="Togashi T."/>
            <person name="Oyama M."/>
            <person name="Hata H."/>
            <person name="Watanabe M."/>
            <person name="Komatsu T."/>
            <person name="Mizushima-Sugano J."/>
            <person name="Satoh T."/>
            <person name="Shirai Y."/>
            <person name="Takahashi Y."/>
            <person name="Nakagawa K."/>
            <person name="Okumura K."/>
            <person name="Nagase T."/>
            <person name="Nomura N."/>
            <person name="Kikuchi H."/>
            <person name="Masuho Y."/>
            <person name="Yamashita R."/>
            <person name="Nakai K."/>
            <person name="Yada T."/>
            <person name="Nakamura Y."/>
            <person name="Ohara O."/>
            <person name="Isogai T."/>
            <person name="Sugano S."/>
        </authorList>
    </citation>
    <scope>NUCLEOTIDE SEQUENCE [LARGE SCALE MRNA] (ISOFORM 2)</scope>
</reference>
<reference key="6">
    <citation type="journal article" date="1999" name="Nature">
        <title>The DNA sequence of human chromosome 22.</title>
        <authorList>
            <person name="Dunham I."/>
            <person name="Hunt A.R."/>
            <person name="Collins J.E."/>
            <person name="Bruskiewich R."/>
            <person name="Beare D.M."/>
            <person name="Clamp M."/>
            <person name="Smink L.J."/>
            <person name="Ainscough R."/>
            <person name="Almeida J.P."/>
            <person name="Babbage A.K."/>
            <person name="Bagguley C."/>
            <person name="Bailey J."/>
            <person name="Barlow K.F."/>
            <person name="Bates K.N."/>
            <person name="Beasley O.P."/>
            <person name="Bird C.P."/>
            <person name="Blakey S.E."/>
            <person name="Bridgeman A.M."/>
            <person name="Buck D."/>
            <person name="Burgess J."/>
            <person name="Burrill W.D."/>
            <person name="Burton J."/>
            <person name="Carder C."/>
            <person name="Carter N.P."/>
            <person name="Chen Y."/>
            <person name="Clark G."/>
            <person name="Clegg S.M."/>
            <person name="Cobley V.E."/>
            <person name="Cole C.G."/>
            <person name="Collier R.E."/>
            <person name="Connor R."/>
            <person name="Conroy D."/>
            <person name="Corby N.R."/>
            <person name="Coville G.J."/>
            <person name="Cox A.V."/>
            <person name="Davis J."/>
            <person name="Dawson E."/>
            <person name="Dhami P.D."/>
            <person name="Dockree C."/>
            <person name="Dodsworth S.J."/>
            <person name="Durbin R.M."/>
            <person name="Ellington A.G."/>
            <person name="Evans K.L."/>
            <person name="Fey J.M."/>
            <person name="Fleming K."/>
            <person name="French L."/>
            <person name="Garner A.A."/>
            <person name="Gilbert J.G.R."/>
            <person name="Goward M.E."/>
            <person name="Grafham D.V."/>
            <person name="Griffiths M.N.D."/>
            <person name="Hall C."/>
            <person name="Hall R.E."/>
            <person name="Hall-Tamlyn G."/>
            <person name="Heathcott R.W."/>
            <person name="Ho S."/>
            <person name="Holmes S."/>
            <person name="Hunt S.E."/>
            <person name="Jones M.C."/>
            <person name="Kershaw J."/>
            <person name="Kimberley A.M."/>
            <person name="King A."/>
            <person name="Laird G.K."/>
            <person name="Langford C.F."/>
            <person name="Leversha M.A."/>
            <person name="Lloyd C."/>
            <person name="Lloyd D.M."/>
            <person name="Martyn I.D."/>
            <person name="Mashreghi-Mohammadi M."/>
            <person name="Matthews L.H."/>
            <person name="Mccann O.T."/>
            <person name="Mcclay J."/>
            <person name="Mclaren S."/>
            <person name="McMurray A.A."/>
            <person name="Milne S.A."/>
            <person name="Mortimore B.J."/>
            <person name="Odell C.N."/>
            <person name="Pavitt R."/>
            <person name="Pearce A.V."/>
            <person name="Pearson D."/>
            <person name="Phillimore B.J.C.T."/>
            <person name="Phillips S.H."/>
            <person name="Plumb R.W."/>
            <person name="Ramsay H."/>
            <person name="Ramsey Y."/>
            <person name="Rogers L."/>
            <person name="Ross M.T."/>
            <person name="Scott C.E."/>
            <person name="Sehra H.K."/>
            <person name="Skuce C.D."/>
            <person name="Smalley S."/>
            <person name="Smith M.L."/>
            <person name="Soderlund C."/>
            <person name="Spragon L."/>
            <person name="Steward C.A."/>
            <person name="Sulston J.E."/>
            <person name="Swann R.M."/>
            <person name="Vaudin M."/>
            <person name="Wall M."/>
            <person name="Wallis J.M."/>
            <person name="Whiteley M.N."/>
            <person name="Willey D.L."/>
            <person name="Williams L."/>
            <person name="Williams S.A."/>
            <person name="Williamson H."/>
            <person name="Wilmer T.E."/>
            <person name="Wilming L."/>
            <person name="Wright C.L."/>
            <person name="Hubbard T."/>
            <person name="Bentley D.R."/>
            <person name="Beck S."/>
            <person name="Rogers J."/>
            <person name="Shimizu N."/>
            <person name="Minoshima S."/>
            <person name="Kawasaki K."/>
            <person name="Sasaki T."/>
            <person name="Asakawa S."/>
            <person name="Kudoh J."/>
            <person name="Shintani A."/>
            <person name="Shibuya K."/>
            <person name="Yoshizaki Y."/>
            <person name="Aoki N."/>
            <person name="Mitsuyama S."/>
            <person name="Roe B.A."/>
            <person name="Chen F."/>
            <person name="Chu L."/>
            <person name="Crabtree J."/>
            <person name="Deschamps S."/>
            <person name="Do A."/>
            <person name="Do T."/>
            <person name="Dorman A."/>
            <person name="Fang F."/>
            <person name="Fu Y."/>
            <person name="Hu P."/>
            <person name="Hua A."/>
            <person name="Kenton S."/>
            <person name="Lai H."/>
            <person name="Lao H.I."/>
            <person name="Lewis J."/>
            <person name="Lewis S."/>
            <person name="Lin S.-P."/>
            <person name="Loh P."/>
            <person name="Malaj E."/>
            <person name="Nguyen T."/>
            <person name="Pan H."/>
            <person name="Phan S."/>
            <person name="Qi S."/>
            <person name="Qian Y."/>
            <person name="Ray L."/>
            <person name="Ren Q."/>
            <person name="Shaull S."/>
            <person name="Sloan D."/>
            <person name="Song L."/>
            <person name="Wang Q."/>
            <person name="Wang Y."/>
            <person name="Wang Z."/>
            <person name="White J."/>
            <person name="Willingham D."/>
            <person name="Wu H."/>
            <person name="Yao Z."/>
            <person name="Zhan M."/>
            <person name="Zhang G."/>
            <person name="Chissoe S."/>
            <person name="Murray J."/>
            <person name="Miller N."/>
            <person name="Minx P."/>
            <person name="Fulton R."/>
            <person name="Johnson D."/>
            <person name="Bemis G."/>
            <person name="Bentley D."/>
            <person name="Bradshaw H."/>
            <person name="Bourne S."/>
            <person name="Cordes M."/>
            <person name="Du Z."/>
            <person name="Fulton L."/>
            <person name="Goela D."/>
            <person name="Graves T."/>
            <person name="Hawkins J."/>
            <person name="Hinds K."/>
            <person name="Kemp K."/>
            <person name="Latreille P."/>
            <person name="Layman D."/>
            <person name="Ozersky P."/>
            <person name="Rohlfing T."/>
            <person name="Scheet P."/>
            <person name="Walker C."/>
            <person name="Wamsley A."/>
            <person name="Wohldmann P."/>
            <person name="Pepin K."/>
            <person name="Nelson J."/>
            <person name="Korf I."/>
            <person name="Bedell J.A."/>
            <person name="Hillier L.W."/>
            <person name="Mardis E."/>
            <person name="Waterston R."/>
            <person name="Wilson R."/>
            <person name="Emanuel B.S."/>
            <person name="Shaikh T."/>
            <person name="Kurahashi H."/>
            <person name="Saitta S."/>
            <person name="Budarf M.L."/>
            <person name="McDermid H.E."/>
            <person name="Johnson A."/>
            <person name="Wong A.C.C."/>
            <person name="Morrow B.E."/>
            <person name="Edelmann L."/>
            <person name="Kim U.J."/>
            <person name="Shizuya H."/>
            <person name="Simon M.I."/>
            <person name="Dumanski J.P."/>
            <person name="Peyrard M."/>
            <person name="Kedra D."/>
            <person name="Seroussi E."/>
            <person name="Fransson I."/>
            <person name="Tapia I."/>
            <person name="Bruder C.E."/>
            <person name="O'Brien K.P."/>
            <person name="Wilkinson P."/>
            <person name="Bodenteich A."/>
            <person name="Hartman K."/>
            <person name="Hu X."/>
            <person name="Khan A.S."/>
            <person name="Lane L."/>
            <person name="Tilahun Y."/>
            <person name="Wright H."/>
        </authorList>
    </citation>
    <scope>NUCLEOTIDE SEQUENCE [LARGE SCALE GENOMIC DNA]</scope>
</reference>
<reference key="7">
    <citation type="submission" date="2005-09" db="EMBL/GenBank/DDBJ databases">
        <authorList>
            <person name="Mural R.J."/>
            <person name="Istrail S."/>
            <person name="Sutton G."/>
            <person name="Florea L."/>
            <person name="Halpern A.L."/>
            <person name="Mobarry C.M."/>
            <person name="Lippert R."/>
            <person name="Walenz B."/>
            <person name="Shatkay H."/>
            <person name="Dew I."/>
            <person name="Miller J.R."/>
            <person name="Flanigan M.J."/>
            <person name="Edwards N.J."/>
            <person name="Bolanos R."/>
            <person name="Fasulo D."/>
            <person name="Halldorsson B.V."/>
            <person name="Hannenhalli S."/>
            <person name="Turner R."/>
            <person name="Yooseph S."/>
            <person name="Lu F."/>
            <person name="Nusskern D.R."/>
            <person name="Shue B.C."/>
            <person name="Zheng X.H."/>
            <person name="Zhong F."/>
            <person name="Delcher A.L."/>
            <person name="Huson D.H."/>
            <person name="Kravitz S.A."/>
            <person name="Mouchard L."/>
            <person name="Reinert K."/>
            <person name="Remington K.A."/>
            <person name="Clark A.G."/>
            <person name="Waterman M.S."/>
            <person name="Eichler E.E."/>
            <person name="Adams M.D."/>
            <person name="Hunkapiller M.W."/>
            <person name="Myers E.W."/>
            <person name="Venter J.C."/>
        </authorList>
    </citation>
    <scope>NUCLEOTIDE SEQUENCE [LARGE SCALE GENOMIC DNA]</scope>
</reference>
<reference key="8">
    <citation type="journal article" date="2004" name="Genome Res.">
        <title>The status, quality, and expansion of the NIH full-length cDNA project: the Mammalian Gene Collection (MGC).</title>
        <authorList>
            <consortium name="The MGC Project Team"/>
        </authorList>
    </citation>
    <scope>NUCLEOTIDE SEQUENCE [LARGE SCALE MRNA] (ISOFORM 1)</scope>
    <source>
        <tissue>Lung</tissue>
    </source>
</reference>
<reference key="9">
    <citation type="submission" date="2008-12" db="UniProtKB">
        <authorList>
            <person name="Lubec G."/>
            <person name="Afjehi-Sadat L."/>
            <person name="Chen W.-Q."/>
            <person name="Sun Y."/>
        </authorList>
    </citation>
    <scope>PROTEIN SEQUENCE OF 23-36; 42-71; 82-90; 182-190; 297-308 AND 325-343</scope>
    <scope>IDENTIFICATION BY MASS SPECTROMETRY</scope>
    <source>
        <tissue>Brain</tissue>
        <tissue>Cajal-Retzius cell</tissue>
        <tissue>Fetal brain cortex</tissue>
    </source>
</reference>
<reference key="10">
    <citation type="journal article" date="2002" name="FEBS Lett.">
        <title>Human septin-septin interaction: CDCrel-1 partners with KIAA0202.</title>
        <authorList>
            <person name="Blaeser S."/>
            <person name="Jersch K."/>
            <person name="Hainmann I."/>
            <person name="Wunderle D."/>
            <person name="Zgaga-Griesz A."/>
            <person name="Busse A."/>
            <person name="Zieger B."/>
        </authorList>
    </citation>
    <scope>INTERACTION WITH SEPTIN8</scope>
    <scope>TISSUE SPECIFICITY</scope>
</reference>
<reference key="11">
    <citation type="journal article" date="2002" name="Proc. Natl. Acad. Sci. U.S.A.">
        <title>A prototypic platelet septin and its participation in secretion.</title>
        <authorList>
            <person name="Dent J."/>
            <person name="Kato K."/>
            <person name="Peng X.-R."/>
            <person name="Martinez C."/>
            <person name="Cattaneo M."/>
            <person name="Poujol C."/>
            <person name="Nurden P."/>
            <person name="Nurden A."/>
            <person name="Trimble W.S."/>
            <person name="Ware J."/>
        </authorList>
    </citation>
    <scope>IDENTIFICATION IN A COMPLEX WITH STX4</scope>
    <scope>PHOSPHORYLATION</scope>
</reference>
<reference key="12">
    <citation type="journal article" date="2003" name="Proc. Natl. Acad. Sci. U.S.A.">
        <title>Dopamine-dependent neurodegeneration in rats induced by viral vector-mediated overexpression of the parkin target protein, CDCrel-1.</title>
        <authorList>
            <person name="Dong Z."/>
            <person name="Ferger B."/>
            <person name="Paterna J.-C."/>
            <person name="Vogel D."/>
            <person name="Furler S."/>
            <person name="Osinde M."/>
            <person name="Feldon J."/>
            <person name="Bueeler H."/>
        </authorList>
    </citation>
    <scope>POSSIBLE INVOLVEMENT IN PRKN</scope>
</reference>
<reference key="13">
    <citation type="journal article" date="2005" name="J. Pathol.">
        <title>Expression profiling the human septin gene family.</title>
        <authorList>
            <person name="Hall P.A."/>
            <person name="Jung K."/>
            <person name="Hillan K.J."/>
            <person name="Russell S.E.H."/>
        </authorList>
    </citation>
    <scope>TISSUE SPECIFICITY</scope>
</reference>
<reference key="14">
    <citation type="journal article" date="2008" name="J. Proteome Res.">
        <title>Phosphoproteome of resting human platelets.</title>
        <authorList>
            <person name="Zahedi R.P."/>
            <person name="Lewandrowski U."/>
            <person name="Wiesner J."/>
            <person name="Wortelkamp S."/>
            <person name="Moebius J."/>
            <person name="Schuetz C."/>
            <person name="Walter U."/>
            <person name="Gambaryan S."/>
            <person name="Sickmann A."/>
        </authorList>
    </citation>
    <scope>PHOSPHORYLATION [LARGE SCALE ANALYSIS] AT SER-225</scope>
    <scope>IDENTIFICATION BY MASS SPECTROMETRY [LARGE SCALE ANALYSIS]</scope>
    <source>
        <tissue>Platelet</tissue>
    </source>
</reference>
<reference key="15">
    <citation type="journal article" date="2009" name="Sci. Signal.">
        <title>Quantitative phosphoproteomic analysis of T cell receptor signaling reveals system-wide modulation of protein-protein interactions.</title>
        <authorList>
            <person name="Mayya V."/>
            <person name="Lundgren D.H."/>
            <person name="Hwang S.-I."/>
            <person name="Rezaul K."/>
            <person name="Wu L."/>
            <person name="Eng J.K."/>
            <person name="Rodionov V."/>
            <person name="Han D.K."/>
        </authorList>
    </citation>
    <scope>PHOSPHORYLATION [LARGE SCALE ANALYSIS] AT SER-225 AND SER-327</scope>
    <scope>IDENTIFICATION BY MASS SPECTROMETRY [LARGE SCALE ANALYSIS]</scope>
    <source>
        <tissue>Leukemic T-cell</tissue>
    </source>
</reference>
<reference key="16">
    <citation type="journal article" date="2011" name="BMC Syst. Biol.">
        <title>Initial characterization of the human central proteome.</title>
        <authorList>
            <person name="Burkard T.R."/>
            <person name="Planyavsky M."/>
            <person name="Kaupe I."/>
            <person name="Breitwieser F.P."/>
            <person name="Buerckstuemmer T."/>
            <person name="Bennett K.L."/>
            <person name="Superti-Furga G."/>
            <person name="Colinge J."/>
        </authorList>
    </citation>
    <scope>IDENTIFICATION BY MASS SPECTROMETRY [LARGE SCALE ANALYSIS]</scope>
</reference>
<reference key="17">
    <citation type="journal article" date="2013" name="J. Proteome Res.">
        <title>Toward a comprehensive characterization of a human cancer cell phosphoproteome.</title>
        <authorList>
            <person name="Zhou H."/>
            <person name="Di Palma S."/>
            <person name="Preisinger C."/>
            <person name="Peng M."/>
            <person name="Polat A.N."/>
            <person name="Heck A.J."/>
            <person name="Mohammed S."/>
        </authorList>
    </citation>
    <scope>PHOSPHORYLATION [LARGE SCALE ANALYSIS] AT SER-225 AND SER-327</scope>
    <scope>IDENTIFICATION BY MASS SPECTROMETRY [LARGE SCALE ANALYSIS]</scope>
    <source>
        <tissue>Erythroleukemia</tissue>
    </source>
</reference>
<accession>Q99719</accession>
<accession>O15251</accession>
<accession>Q96MY5</accession>
<comment type="function">
    <text evidence="1 9">Filament-forming cytoskeletal GTPase (By similarity). May play a role in cytokinesis (Potential). May play a role in platelet secretion (By similarity).</text>
</comment>
<comment type="subunit">
    <text evidence="1 2">Septins polymerize into heterooligomeric protein complexes that form filaments, and can associate with cellular membranes, actin filaments and microtubules. GTPase activity is required for filament formation (By similarity). Interacts with SEPTIN2 and SEPTIN5. In platelets, associated with a complex containing STX4. Interacts with PRKN; this interaction leads to SEPTIN5 ubiquitination and degradation (By similarity). Interacts with DYRK1A (By similarity). Interacts with STX1A; in the cerebellar cortex (By similarity).</text>
</comment>
<comment type="interaction">
    <interactant intactId="EBI-373345">
        <id>Q99719</id>
    </interactant>
    <interactant intactId="EBI-77613">
        <id>P05067</id>
        <label>APP</label>
    </interactant>
    <organismsDiffer>false</organismsDiffer>
    <experiments>3</experiments>
</comment>
<comment type="interaction">
    <interactant intactId="EBI-373345">
        <id>Q99719</id>
    </interactant>
    <interactant intactId="EBI-742054">
        <id>Q96D03</id>
        <label>DDIT4L</label>
    </interactant>
    <organismsDiffer>false</organismsDiffer>
    <experiments>3</experiments>
</comment>
<comment type="interaction">
    <interactant intactId="EBI-373345">
        <id>Q99719</id>
    </interactant>
    <interactant intactId="EBI-5650739">
        <id>P43356</id>
        <label>MAGEA2B</label>
    </interactant>
    <organismsDiffer>false</organismsDiffer>
    <experiments>4</experiments>
</comment>
<comment type="interaction">
    <interactant intactId="EBI-373345">
        <id>Q99719</id>
    </interactant>
    <interactant intactId="EBI-347233">
        <id>O75376</id>
        <label>NCOR1</label>
    </interactant>
    <organismsDiffer>false</organismsDiffer>
    <experiments>3</experiments>
</comment>
<comment type="interaction">
    <interactant intactId="EBI-373345">
        <id>Q99719</id>
    </interactant>
    <interactant intactId="EBI-752324">
        <id>Q8N488</id>
        <label>RYBP</label>
    </interactant>
    <organismsDiffer>false</organismsDiffer>
    <experiments>3</experiments>
</comment>
<comment type="interaction">
    <interactant intactId="EBI-373345">
        <id>Q99719</id>
    </interactant>
    <interactant intactId="EBI-693002">
        <id>Q8WYJ6</id>
        <label>SEPTIN1</label>
    </interactant>
    <organismsDiffer>false</organismsDiffer>
    <experiments>15</experiments>
</comment>
<comment type="interaction">
    <interactant intactId="EBI-373345">
        <id>Q99719</id>
    </interactant>
    <interactant intactId="EBI-3943788">
        <id>Q9P0V9</id>
        <label>SEPTIN10</label>
    </interactant>
    <organismsDiffer>false</organismsDiffer>
    <experiments>8</experiments>
</comment>
<comment type="interaction">
    <interactant intactId="EBI-373345">
        <id>Q99719</id>
    </interactant>
    <interactant intactId="EBI-957999">
        <id>Q9NVA2</id>
        <label>SEPTIN11</label>
    </interactant>
    <organismsDiffer>false</organismsDiffer>
    <experiments>13</experiments>
</comment>
<comment type="interaction">
    <interactant intactId="EBI-373345">
        <id>Q99719</id>
    </interactant>
    <interactant intactId="EBI-2585067">
        <id>Q8IYM1</id>
        <label>SEPTIN12</label>
    </interactant>
    <organismsDiffer>false</organismsDiffer>
    <experiments>9</experiments>
</comment>
<comment type="interaction">
    <interactant intactId="EBI-373345">
        <id>Q99719</id>
    </interactant>
    <interactant intactId="EBI-741220">
        <id>Q15019</id>
        <label>SEPTIN2</label>
    </interactant>
    <organismsDiffer>false</organismsDiffer>
    <experiments>7</experiments>
</comment>
<comment type="interaction">
    <interactant intactId="EBI-373345">
        <id>Q99719</id>
    </interactant>
    <interactant intactId="EBI-11525407">
        <id>Q15019-3</id>
        <label>SEPTIN2</label>
    </interactant>
    <organismsDiffer>false</organismsDiffer>
    <experiments>7</experiments>
</comment>
<comment type="interaction">
    <interactant intactId="EBI-373345">
        <id>Q99719</id>
    </interactant>
    <interactant intactId="EBI-373345">
        <id>Q99719</id>
        <label>SEPTIN5</label>
    </interactant>
    <organismsDiffer>false</organismsDiffer>
    <experiments>3</experiments>
</comment>
<comment type="interaction">
    <interactant intactId="EBI-373345">
        <id>Q99719</id>
    </interactant>
    <interactant intactId="EBI-745901">
        <id>Q14141</id>
        <label>SEPTIN6</label>
    </interactant>
    <organismsDiffer>false</organismsDiffer>
    <experiments>11</experiments>
</comment>
<comment type="interaction">
    <interactant intactId="EBI-373345">
        <id>Q99719</id>
    </interactant>
    <interactant intactId="EBI-2009373">
        <id>Q16181</id>
        <label>SEPTIN7</label>
    </interactant>
    <organismsDiffer>false</organismsDiffer>
    <experiments>4</experiments>
</comment>
<comment type="interaction">
    <interactant intactId="EBI-373345">
        <id>Q99719</id>
    </interactant>
    <interactant intactId="EBI-958021">
        <id>Q92599</id>
        <label>SEPTIN8</label>
    </interactant>
    <organismsDiffer>false</organismsDiffer>
    <experiments>7</experiments>
</comment>
<comment type="interaction">
    <interactant intactId="EBI-373345">
        <id>Q99719</id>
    </interactant>
    <interactant intactId="EBI-742688">
        <id>Q9NZD8</id>
        <label>SPG21</label>
    </interactant>
    <organismsDiffer>false</organismsDiffer>
    <experiments>3</experiments>
</comment>
<comment type="subcellular location">
    <subcellularLocation>
        <location evidence="1">Cytoplasm</location>
    </subcellularLocation>
    <subcellularLocation>
        <location evidence="1">Cytoplasm</location>
        <location evidence="1">Cytoskeleton</location>
    </subcellularLocation>
    <text>In platelets, found in areas surrounding alpha-granules.</text>
</comment>
<comment type="alternative products">
    <event type="alternative splicing"/>
    <isoform>
        <id>Q99719-1</id>
        <name>1</name>
        <sequence type="displayed"/>
    </isoform>
    <isoform>
        <id>Q99719-2</id>
        <name>2</name>
        <sequence type="described" ref="VSP_042689 VSP_042690"/>
    </isoform>
</comment>
<comment type="tissue specificity">
    <text evidence="6 7">Expressed at high levels in the CNS, as well as in heart and platelets (at protein level).</text>
</comment>
<comment type="PTM">
    <text evidence="2 5">Phosphorylated by DYRK1A (By similarity). In platelets, phosphorylated in response to thrombin, phorbol-12-myristate-13-acetate and collagen.</text>
</comment>
<comment type="miscellaneous">
    <text>In a heterologous system, SEPTIN5 overexpression has been shown to exert dopamine-dependent neurotoxicity. As wild-type PRKN, but not familial-linked PRKN mutants, ubiquitinates mouse SEPTIN5 and promotes its degradation, it has been suggested that a deficiency in SEPTIN5 degradation may contribute to the development of early onset Parkinson disease 2 (PARK2).</text>
</comment>
<comment type="similarity">
    <text evidence="4">Belongs to the TRAFAC class TrmE-Era-EngA-EngB-Septin-like GTPase superfamily. Septin GTPase family.</text>
</comment>
<comment type="online information" name="Atlas of Genetics and Cytogenetics in Oncology and Haematology">
    <link uri="https://atlasgeneticsoncology.org/gene/220/hCDCRel-1"/>
</comment>
<proteinExistence type="evidence at protein level"/>
<dbReference type="EMBL" id="U74628">
    <property type="protein sequence ID" value="AAB93438.1"/>
    <property type="molecule type" value="mRNA"/>
</dbReference>
<dbReference type="EMBL" id="Y11593">
    <property type="protein sequence ID" value="CAA72332.1"/>
    <property type="molecule type" value="mRNA"/>
</dbReference>
<dbReference type="EMBL" id="AF006988">
    <property type="protein sequence ID" value="AAC39779.1"/>
    <property type="molecule type" value="Genomic_DNA"/>
</dbReference>
<dbReference type="EMBL" id="CR456545">
    <property type="protein sequence ID" value="CAG30431.1"/>
    <property type="molecule type" value="mRNA"/>
</dbReference>
<dbReference type="EMBL" id="AK056273">
    <property type="protein sequence ID" value="BAB71133.1"/>
    <property type="molecule type" value="mRNA"/>
</dbReference>
<dbReference type="EMBL" id="AC000093">
    <property type="status" value="NOT_ANNOTATED_CDS"/>
    <property type="molecule type" value="Genomic_DNA"/>
</dbReference>
<dbReference type="EMBL" id="CH471176">
    <property type="protein sequence ID" value="EAX03032.1"/>
    <property type="molecule type" value="Genomic_DNA"/>
</dbReference>
<dbReference type="EMBL" id="BC025261">
    <property type="protein sequence ID" value="AAH25261.1"/>
    <property type="molecule type" value="mRNA"/>
</dbReference>
<dbReference type="CCDS" id="CCDS13764.1">
    <molecule id="Q99719-1"/>
</dbReference>
<dbReference type="CCDS" id="CCDS56224.1">
    <molecule id="Q99719-2"/>
</dbReference>
<dbReference type="RefSeq" id="NP_001009939.1">
    <molecule id="Q99719-2"/>
    <property type="nucleotide sequence ID" value="NM_001009939.3"/>
</dbReference>
<dbReference type="RefSeq" id="NP_002679.2">
    <molecule id="Q99719-1"/>
    <property type="nucleotide sequence ID" value="NM_002688.5"/>
</dbReference>
<dbReference type="PDB" id="6WCU">
    <property type="method" value="X-ray"/>
    <property type="resolution" value="1.80 A"/>
    <property type="chains" value="A/B=340-369"/>
</dbReference>
<dbReference type="PDBsum" id="6WCU"/>
<dbReference type="SMR" id="Q99719"/>
<dbReference type="BioGRID" id="111414">
    <property type="interactions" value="53"/>
</dbReference>
<dbReference type="CORUM" id="Q99719"/>
<dbReference type="DIP" id="DIP-31201N"/>
<dbReference type="FunCoup" id="Q99719">
    <property type="interactions" value="258"/>
</dbReference>
<dbReference type="IntAct" id="Q99719">
    <property type="interactions" value="44"/>
</dbReference>
<dbReference type="MINT" id="Q99719"/>
<dbReference type="STRING" id="9606.ENSP00000391311"/>
<dbReference type="ChEMBL" id="CHEMBL5465347"/>
<dbReference type="GlyGen" id="Q99719">
    <property type="glycosylation" value="1 site"/>
</dbReference>
<dbReference type="iPTMnet" id="Q99719"/>
<dbReference type="PhosphoSitePlus" id="Q99719"/>
<dbReference type="SwissPalm" id="Q99719"/>
<dbReference type="BioMuta" id="SEPT5"/>
<dbReference type="DMDM" id="6685760"/>
<dbReference type="jPOST" id="Q99719"/>
<dbReference type="MassIVE" id="Q99719"/>
<dbReference type="PaxDb" id="9606-ENSP00000391311"/>
<dbReference type="PeptideAtlas" id="Q99719"/>
<dbReference type="ProteomicsDB" id="78433">
    <molecule id="Q99719-1"/>
</dbReference>
<dbReference type="ProteomicsDB" id="78434">
    <molecule id="Q99719-2"/>
</dbReference>
<dbReference type="Pumba" id="Q99719"/>
<dbReference type="Antibodypedia" id="4242">
    <property type="antibodies" value="253 antibodies from 36 providers"/>
</dbReference>
<dbReference type="DNASU" id="5413"/>
<dbReference type="Ensembl" id="ENST00000438754.6">
    <molecule id="Q99719-2"/>
    <property type="protein sequence ID" value="ENSP00000394541.2"/>
    <property type="gene ID" value="ENSG00000184702.20"/>
</dbReference>
<dbReference type="Ensembl" id="ENST00000455784.7">
    <molecule id="Q99719-1"/>
    <property type="protein sequence ID" value="ENSP00000391311.2"/>
    <property type="gene ID" value="ENSG00000184702.20"/>
</dbReference>
<dbReference type="GeneID" id="5413"/>
<dbReference type="KEGG" id="hsa:5413"/>
<dbReference type="MANE-Select" id="ENST00000455784.7">
    <property type="protein sequence ID" value="ENSP00000391311.2"/>
    <property type="RefSeq nucleotide sequence ID" value="NM_002688.6"/>
    <property type="RefSeq protein sequence ID" value="NP_002679.2"/>
</dbReference>
<dbReference type="UCSC" id="uc002zpw.2">
    <molecule id="Q99719-1"/>
    <property type="organism name" value="human"/>
</dbReference>
<dbReference type="AGR" id="HGNC:9164"/>
<dbReference type="CTD" id="5413"/>
<dbReference type="DisGeNET" id="5413"/>
<dbReference type="GeneCards" id="SEPTIN5"/>
<dbReference type="HGNC" id="HGNC:9164">
    <property type="gene designation" value="SEPTIN5"/>
</dbReference>
<dbReference type="HPA" id="ENSG00000184702">
    <property type="expression patterns" value="Tissue enhanced (brain)"/>
</dbReference>
<dbReference type="MIM" id="602724">
    <property type="type" value="gene"/>
</dbReference>
<dbReference type="neXtProt" id="NX_Q99719"/>
<dbReference type="OpenTargets" id="ENSG00000184702"/>
<dbReference type="PharmGKB" id="PA33486"/>
<dbReference type="VEuPathDB" id="HostDB:ENSG00000184702"/>
<dbReference type="eggNOG" id="KOG2655">
    <property type="taxonomic scope" value="Eukaryota"/>
</dbReference>
<dbReference type="GeneTree" id="ENSGT00940000159913"/>
<dbReference type="HOGENOM" id="CLU_017718_0_0_1"/>
<dbReference type="InParanoid" id="Q99719"/>
<dbReference type="OMA" id="YSHARNG"/>
<dbReference type="OrthoDB" id="416553at2759"/>
<dbReference type="PAN-GO" id="Q99719">
    <property type="GO annotations" value="10 GO annotations based on evolutionary models"/>
</dbReference>
<dbReference type="PhylomeDB" id="Q99719"/>
<dbReference type="TreeFam" id="TF101079"/>
<dbReference type="PathwayCommons" id="Q99719"/>
<dbReference type="SignaLink" id="Q99719"/>
<dbReference type="SIGNOR" id="Q99719"/>
<dbReference type="BioGRID-ORCS" id="5413">
    <property type="hits" value="25 hits in 1085 CRISPR screens"/>
</dbReference>
<dbReference type="CD-CODE" id="FB4E32DD">
    <property type="entry name" value="Presynaptic clusters and postsynaptic densities"/>
</dbReference>
<dbReference type="ChiTaRS" id="SEPT5">
    <property type="organism name" value="human"/>
</dbReference>
<dbReference type="GeneWiki" id="SEPT5"/>
<dbReference type="GenomeRNAi" id="5413"/>
<dbReference type="Pharos" id="Q99719">
    <property type="development level" value="Tbio"/>
</dbReference>
<dbReference type="PRO" id="PR:Q99719"/>
<dbReference type="Proteomes" id="UP000005640">
    <property type="component" value="Chromosome 22"/>
</dbReference>
<dbReference type="RNAct" id="Q99719">
    <property type="molecule type" value="protein"/>
</dbReference>
<dbReference type="Bgee" id="ENSG00000184702">
    <property type="expression patterns" value="Expressed in right frontal lobe and 115 other cell types or tissues"/>
</dbReference>
<dbReference type="ExpressionAtlas" id="Q99719">
    <property type="expression patterns" value="baseline and differential"/>
</dbReference>
<dbReference type="GO" id="GO:0032153">
    <property type="term" value="C:cell division site"/>
    <property type="evidence" value="ECO:0000318"/>
    <property type="project" value="GO_Central"/>
</dbReference>
<dbReference type="GO" id="GO:0015630">
    <property type="term" value="C:microtubule cytoskeleton"/>
    <property type="evidence" value="ECO:0000318"/>
    <property type="project" value="GO_Central"/>
</dbReference>
<dbReference type="GO" id="GO:0005886">
    <property type="term" value="C:plasma membrane"/>
    <property type="evidence" value="ECO:0000314"/>
    <property type="project" value="UniProtKB"/>
</dbReference>
<dbReference type="GO" id="GO:0031105">
    <property type="term" value="C:septin complex"/>
    <property type="evidence" value="ECO:0000250"/>
    <property type="project" value="UniProtKB"/>
</dbReference>
<dbReference type="GO" id="GO:0005940">
    <property type="term" value="C:septin ring"/>
    <property type="evidence" value="ECO:0000318"/>
    <property type="project" value="GO_Central"/>
</dbReference>
<dbReference type="GO" id="GO:0008021">
    <property type="term" value="C:synaptic vesicle"/>
    <property type="evidence" value="ECO:0000314"/>
    <property type="project" value="UniProtKB"/>
</dbReference>
<dbReference type="GO" id="GO:0005525">
    <property type="term" value="F:GTP binding"/>
    <property type="evidence" value="ECO:0007669"/>
    <property type="project" value="UniProtKB-KW"/>
</dbReference>
<dbReference type="GO" id="GO:0003924">
    <property type="term" value="F:GTPase activity"/>
    <property type="evidence" value="ECO:0000318"/>
    <property type="project" value="GO_Central"/>
</dbReference>
<dbReference type="GO" id="GO:0042802">
    <property type="term" value="F:identical protein binding"/>
    <property type="evidence" value="ECO:0000353"/>
    <property type="project" value="IntAct"/>
</dbReference>
<dbReference type="GO" id="GO:0060090">
    <property type="term" value="F:molecular adaptor activity"/>
    <property type="evidence" value="ECO:0000318"/>
    <property type="project" value="GO_Central"/>
</dbReference>
<dbReference type="GO" id="GO:0005198">
    <property type="term" value="F:structural molecule activity"/>
    <property type="evidence" value="ECO:0000304"/>
    <property type="project" value="ProtInc"/>
</dbReference>
<dbReference type="GO" id="GO:0030534">
    <property type="term" value="P:adult behavior"/>
    <property type="evidence" value="ECO:0000250"/>
    <property type="project" value="UniProtKB"/>
</dbReference>
<dbReference type="GO" id="GO:0061640">
    <property type="term" value="P:cytoskeleton-dependent cytokinesis"/>
    <property type="evidence" value="ECO:0000318"/>
    <property type="project" value="GO_Central"/>
</dbReference>
<dbReference type="GO" id="GO:0008104">
    <property type="term" value="P:protein localization"/>
    <property type="evidence" value="ECO:0000318"/>
    <property type="project" value="GO_Central"/>
</dbReference>
<dbReference type="GO" id="GO:0017157">
    <property type="term" value="P:regulation of exocytosis"/>
    <property type="evidence" value="ECO:0000315"/>
    <property type="project" value="UniProtKB"/>
</dbReference>
<dbReference type="GO" id="GO:2000300">
    <property type="term" value="P:regulation of synaptic vesicle exocytosis"/>
    <property type="evidence" value="ECO:0000304"/>
    <property type="project" value="ParkinsonsUK-UCL"/>
</dbReference>
<dbReference type="GO" id="GO:0035176">
    <property type="term" value="P:social behavior"/>
    <property type="evidence" value="ECO:0000250"/>
    <property type="project" value="UniProtKB"/>
</dbReference>
<dbReference type="GO" id="GO:0016080">
    <property type="term" value="P:synaptic vesicle targeting"/>
    <property type="evidence" value="ECO:0000304"/>
    <property type="project" value="UniProtKB"/>
</dbReference>
<dbReference type="CDD" id="cd01850">
    <property type="entry name" value="CDC_Septin"/>
    <property type="match status" value="1"/>
</dbReference>
<dbReference type="FunFam" id="3.40.50.300:FF:000064">
    <property type="entry name" value="Septin 4"/>
    <property type="match status" value="1"/>
</dbReference>
<dbReference type="Gene3D" id="3.40.50.300">
    <property type="entry name" value="P-loop containing nucleotide triphosphate hydrolases"/>
    <property type="match status" value="1"/>
</dbReference>
<dbReference type="InterPro" id="IPR030379">
    <property type="entry name" value="G_SEPTIN_dom"/>
</dbReference>
<dbReference type="InterPro" id="IPR027417">
    <property type="entry name" value="P-loop_NTPase"/>
</dbReference>
<dbReference type="InterPro" id="IPR016491">
    <property type="entry name" value="Septin"/>
</dbReference>
<dbReference type="PANTHER" id="PTHR18884">
    <property type="entry name" value="SEPTIN"/>
    <property type="match status" value="1"/>
</dbReference>
<dbReference type="Pfam" id="PF00735">
    <property type="entry name" value="Septin"/>
    <property type="match status" value="1"/>
</dbReference>
<dbReference type="PIRSF" id="PIRSF006698">
    <property type="entry name" value="Septin"/>
    <property type="match status" value="1"/>
</dbReference>
<dbReference type="SUPFAM" id="SSF52540">
    <property type="entry name" value="P-loop containing nucleoside triphosphate hydrolases"/>
    <property type="match status" value="1"/>
</dbReference>
<dbReference type="PROSITE" id="PS51719">
    <property type="entry name" value="G_SEPTIN"/>
    <property type="match status" value="1"/>
</dbReference>
<keyword id="KW-0002">3D-structure</keyword>
<keyword id="KW-0025">Alternative splicing</keyword>
<keyword id="KW-0131">Cell cycle</keyword>
<keyword id="KW-0132">Cell division</keyword>
<keyword id="KW-0175">Coiled coil</keyword>
<keyword id="KW-0963">Cytoplasm</keyword>
<keyword id="KW-0206">Cytoskeleton</keyword>
<keyword id="KW-0903">Direct protein sequencing</keyword>
<keyword id="KW-0342">GTP-binding</keyword>
<keyword id="KW-0488">Methylation</keyword>
<keyword id="KW-0547">Nucleotide-binding</keyword>
<keyword id="KW-0597">Phosphoprotein</keyword>
<keyword id="KW-1267">Proteomics identification</keyword>
<keyword id="KW-1185">Reference proteome</keyword>
<organism>
    <name type="scientific">Homo sapiens</name>
    <name type="common">Human</name>
    <dbReference type="NCBI Taxonomy" id="9606"/>
    <lineage>
        <taxon>Eukaryota</taxon>
        <taxon>Metazoa</taxon>
        <taxon>Chordata</taxon>
        <taxon>Craniata</taxon>
        <taxon>Vertebrata</taxon>
        <taxon>Euteleostomi</taxon>
        <taxon>Mammalia</taxon>
        <taxon>Eutheria</taxon>
        <taxon>Euarchontoglires</taxon>
        <taxon>Primates</taxon>
        <taxon>Haplorrhini</taxon>
        <taxon>Catarrhini</taxon>
        <taxon>Hominidae</taxon>
        <taxon>Homo</taxon>
    </lineage>
</organism>
<evidence type="ECO:0000250" key="1"/>
<evidence type="ECO:0000250" key="2">
    <source>
        <dbReference type="UniProtKB" id="Q9Z2Q6"/>
    </source>
</evidence>
<evidence type="ECO:0000255" key="3"/>
<evidence type="ECO:0000255" key="4">
    <source>
        <dbReference type="PROSITE-ProRule" id="PRU01056"/>
    </source>
</evidence>
<evidence type="ECO:0000269" key="5">
    <source>
    </source>
</evidence>
<evidence type="ECO:0000269" key="6">
    <source>
    </source>
</evidence>
<evidence type="ECO:0000269" key="7">
    <source>
    </source>
</evidence>
<evidence type="ECO:0000303" key="8">
    <source>
    </source>
</evidence>
<evidence type="ECO:0000305" key="9"/>
<evidence type="ECO:0000312" key="10">
    <source>
        <dbReference type="HGNC" id="HGNC:9164"/>
    </source>
</evidence>
<evidence type="ECO:0007744" key="11">
    <source>
    </source>
</evidence>
<evidence type="ECO:0007744" key="12">
    <source>
    </source>
</evidence>
<evidence type="ECO:0007744" key="13">
    <source>
    </source>
</evidence>
<evidence type="ECO:0007829" key="14">
    <source>
        <dbReference type="PDB" id="6WCU"/>
    </source>
</evidence>
<feature type="chain" id="PRO_0000173521" description="Septin-5">
    <location>
        <begin position="1"/>
        <end position="369"/>
    </location>
</feature>
<feature type="domain" description="Septin-type G" evidence="4">
    <location>
        <begin position="41"/>
        <end position="314"/>
    </location>
</feature>
<feature type="region of interest" description="G1 motif" evidence="4">
    <location>
        <begin position="51"/>
        <end position="58"/>
    </location>
</feature>
<feature type="region of interest" description="G3 motif" evidence="4">
    <location>
        <begin position="108"/>
        <end position="111"/>
    </location>
</feature>
<feature type="region of interest" description="G4 motif" evidence="4">
    <location>
        <begin position="189"/>
        <end position="192"/>
    </location>
</feature>
<feature type="coiled-coil region" evidence="3">
    <location>
        <begin position="338"/>
        <end position="369"/>
    </location>
</feature>
<feature type="binding site" evidence="1">
    <location>
        <begin position="51"/>
        <end position="58"/>
    </location>
    <ligand>
        <name>GTP</name>
        <dbReference type="ChEBI" id="CHEBI:37565"/>
    </ligand>
</feature>
<feature type="binding site" evidence="1">
    <location>
        <position position="85"/>
    </location>
    <ligand>
        <name>GTP</name>
        <dbReference type="ChEBI" id="CHEBI:37565"/>
    </ligand>
</feature>
<feature type="binding site" evidence="1">
    <location>
        <position position="111"/>
    </location>
    <ligand>
        <name>GTP</name>
        <dbReference type="ChEBI" id="CHEBI:37565"/>
    </ligand>
</feature>
<feature type="binding site" evidence="1">
    <location>
        <begin position="190"/>
        <end position="198"/>
    </location>
    <ligand>
        <name>GTP</name>
        <dbReference type="ChEBI" id="CHEBI:37565"/>
    </ligand>
</feature>
<feature type="binding site" evidence="1">
    <location>
        <position position="248"/>
    </location>
    <ligand>
        <name>GTP</name>
        <dbReference type="ChEBI" id="CHEBI:37565"/>
    </ligand>
</feature>
<feature type="binding site" evidence="1">
    <location>
        <position position="263"/>
    </location>
    <ligand>
        <name>GTP</name>
        <dbReference type="ChEBI" id="CHEBI:37565"/>
    </ligand>
</feature>
<feature type="modified residue" description="Phosphothreonine" evidence="2">
    <location>
        <position position="13"/>
    </location>
</feature>
<feature type="modified residue" description="Omega-N-methylarginine" evidence="2">
    <location>
        <position position="168"/>
    </location>
</feature>
<feature type="modified residue" description="Phosphoserine" evidence="11 12 13">
    <location>
        <position position="225"/>
    </location>
</feature>
<feature type="modified residue" description="Phosphoserine" evidence="12 13">
    <location>
        <position position="327"/>
    </location>
</feature>
<feature type="modified residue" description="Phosphothreonine" evidence="2">
    <location>
        <position position="336"/>
    </location>
</feature>
<feature type="splice variant" id="VSP_042689" description="In isoform 2." evidence="8">
    <original>MSTGLRYKSKLATPEDKQ</original>
    <variation>MDSLAAPQDRLVEQLLSPRTQAQRRLK</variation>
    <location>
        <begin position="1"/>
        <end position="18"/>
    </location>
</feature>
<feature type="splice variant" id="VSP_042690" description="In isoform 2." evidence="8">
    <original>VENQAHCDFVKLRNMLIRTHMHDLKDVTCDVHYENYRAHCIQQMTSKLTQDSRMESPIPILPLPTPDAETEKLIRMKDEELRRMQEMLQRMKQQMQDQ</original>
    <variation>GALRLREAAQHAHPHAYARPQGRDVRRALRELPRALHPADDQQTDPGQPHGEPHPDPAAAHPGRRD</variation>
    <location>
        <begin position="272"/>
        <end position="369"/>
    </location>
</feature>
<feature type="sequence conflict" description="In Ref. 2; CAA72332." evidence="9" ref="2">
    <original>D</original>
    <variation>N</variation>
    <location>
        <position position="224"/>
    </location>
</feature>
<feature type="helix" evidence="14">
    <location>
        <begin position="341"/>
        <end position="367"/>
    </location>
</feature>
<gene>
    <name evidence="10" type="primary">SEPTIN5</name>
    <name type="synonym">PNUTL1</name>
    <name type="synonym">SEPT5</name>
</gene>
<sequence length="369" mass="42777">MSTGLRYKSKLATPEDKQDIDKQYVGFATLPNQVHRKSVKKGFDFTLMVAGESGLGKSTLVHSLFLTDLYKDRKLLSAEERISQTVEILKHTVDIEEKGVKLKLTIVDTPGFGDAVNNTECWKPITDYVDQQFEQYFRDESGLNRKNIQDNRVHCCLYFISPFGHGLRPVDVGFMKALHEKVNIVPLIAKADCLVPSEIRKLKERIREEIDKFGIHVYQFPECDSDEDEDFKQQDRELKESAPFAVIGSNTVVEAKGQRVRGRLYPWGIVEVENQAHCDFVKLRNMLIRTHMHDLKDVTCDVHYENYRAHCIQQMTSKLTQDSRMESPIPILPLPTPDAETEKLIRMKDEELRRMQEMLQRMKQQMQDQ</sequence>
<name>SEPT5_HUMAN</name>
<protein>
    <recommendedName>
        <fullName>Septin-5</fullName>
    </recommendedName>
    <alternativeName>
        <fullName>Cell division control-related protein 1</fullName>
        <shortName>CDCrel-1</shortName>
    </alternativeName>
    <alternativeName>
        <fullName>Peanut-like protein 1</fullName>
    </alternativeName>
</protein>